<sequence length="304" mass="33465">MIYTCTMNTAVDLFVETDELLPDVVNRTKDEDYQPNGKGVNISFMLKRLGLDNTALGFTGGFTGRFIENELLNEKIVTDFVEVEGISRINIFINSTREFKIVNKGPLISEARKQELINKIRQIPPGRFLFISGSLPRGVPDDMYLSLSEIAAENKLKLILDISSPVLLDCLSYHPYLIKPNEQELAAFFSRKKALSEEEIIHCGKELLDRGAERVLISRGKDGALYLDRQRTLKATAAKGKVVNTACAGDAMLAVFVGKQELGCSVPEALRHASAAGSLTAFSKGLGDVSKLDQTASQIQITHL</sequence>
<evidence type="ECO:0000250" key="1">
    <source>
        <dbReference type="UniProtKB" id="P0A9J6"/>
    </source>
</evidence>
<evidence type="ECO:0000269" key="2">
    <source>
    </source>
</evidence>
<evidence type="ECO:0000269" key="3">
    <source>
    </source>
</evidence>
<evidence type="ECO:0000303" key="4">
    <source>
    </source>
</evidence>
<evidence type="ECO:0000305" key="5"/>
<evidence type="ECO:0000312" key="6">
    <source>
        <dbReference type="EMBL" id="AAU25004.1"/>
    </source>
</evidence>
<evidence type="ECO:0000312" key="7">
    <source>
        <dbReference type="EMBL" id="AAU42375.1"/>
    </source>
</evidence>
<reference key="1">
    <citation type="journal article" date="2004" name="Genome Biol.">
        <title>Complete genome sequence of the industrial bacterium Bacillus licheniformis and comparisons with closely related Bacillus species.</title>
        <authorList>
            <person name="Rey M.W."/>
            <person name="Ramaiya P."/>
            <person name="Nelson B.A."/>
            <person name="Brody-Karpin S.D."/>
            <person name="Zaretsky E.J."/>
            <person name="Tang M."/>
            <person name="Lopez de Leon A."/>
            <person name="Xiang H."/>
            <person name="Gusti V."/>
            <person name="Clausen I.G."/>
            <person name="Olsen P.B."/>
            <person name="Rasmussen M.D."/>
            <person name="Andersen J.T."/>
            <person name="Joergensen P.L."/>
            <person name="Larsen T.S."/>
            <person name="Sorokin A."/>
            <person name="Bolotin A."/>
            <person name="Lapidus A."/>
            <person name="Galleron N."/>
            <person name="Ehrlich S.D."/>
            <person name="Berka R.M."/>
        </authorList>
    </citation>
    <scope>NUCLEOTIDE SEQUENCE [LARGE SCALE GENOMIC DNA]</scope>
    <source>
        <strain>ATCC 14580 / DSM 13 / JCM 2505 / CCUG 7422 / NBRC 12200 / NCIMB 9375 / NCTC 10341 / NRRL NRS-1264 / Gibson 46</strain>
    </source>
</reference>
<reference key="2">
    <citation type="journal article" date="2004" name="J. Mol. Microbiol. Biotechnol.">
        <title>The complete genome sequence of Bacillus licheniformis DSM13, an organism with great industrial potential.</title>
        <authorList>
            <person name="Veith B."/>
            <person name="Herzberg C."/>
            <person name="Steckel S."/>
            <person name="Feesche J."/>
            <person name="Maurer K.H."/>
            <person name="Ehrenreich P."/>
            <person name="Baeumer S."/>
            <person name="Henne A."/>
            <person name="Liesegang H."/>
            <person name="Merkl R."/>
            <person name="Ehrenreich A."/>
            <person name="Gottschalk G."/>
        </authorList>
    </citation>
    <scope>NUCLEOTIDE SEQUENCE [LARGE SCALE GENOMIC DNA]</scope>
    <source>
        <strain>ATCC 14580 / DSM 13 / JCM 2505 / CCUG 7422 / NBRC 12200 / NCIMB 9375 / NCTC 10341 / NRRL NRS-1264 / Gibson 46</strain>
    </source>
</reference>
<reference key="3">
    <citation type="journal article" date="2013" name="Appl. Environ. Microbiol.">
        <title>A pathway closely related to the (D)-tagatose pathway of gram-negative enterobacteria identified in the gram-positive bacterium Bacillus licheniformis.</title>
        <authorList>
            <person name="Van der Heiden E."/>
            <person name="Delmarcelle M."/>
            <person name="Lebrun S."/>
            <person name="Freichels R."/>
            <person name="Brans A."/>
            <person name="Vastenavond C.M."/>
            <person name="Galleni M."/>
            <person name="Joris B."/>
        </authorList>
    </citation>
    <scope>FUNCTION</scope>
    <scope>PATHWAY</scope>
    <source>
        <strain>ATCC 14580 / DSM 13 / JCM 2505 / CCUG 7422 / NBRC 12200 / NCIMB 9375 / NCTC 10341 / NRRL NRS-1264 / Gibson 46</strain>
    </source>
</reference>
<reference key="4">
    <citation type="journal article" date="2015" name="J. Mol. Microbiol. Biotechnol.">
        <title>Synthesis and Physicochemical Characterization of D-Tagatose-1-Phosphate: The Substrate of the Tagatose-1-Phosphate Kinase in the Phosphotransferase System-Mediated D-Tagatose Catabolic Pathway of Bacillus licheniformis.</title>
        <authorList>
            <person name="Van der Heiden E."/>
            <person name="Delmarcelle M."/>
            <person name="Simon P."/>
            <person name="Counson M."/>
            <person name="Galleni M."/>
            <person name="Freedberg D.I."/>
            <person name="Thompson J."/>
            <person name="Joris B."/>
            <person name="Battistel M.D."/>
        </authorList>
    </citation>
    <scope>FUNCTION</scope>
    <scope>CATALYTIC ACTIVITY</scope>
    <scope>COFACTOR</scope>
    <scope>ACTIVITY REGULATION</scope>
    <scope>BIOPHYSICOCHEMICAL PROPERTIES</scope>
    <scope>PATHWAY</scope>
    <source>
        <strain>ATCC 14580 / DSM 13 / JCM 2505 / CCUG 7422 / NBRC 12200 / NCIMB 9375 / NCTC 10341 / NRRL NRS-1264 / Gibson 46</strain>
    </source>
</reference>
<gene>
    <name evidence="4" type="primary">tagK</name>
    <name evidence="6" type="ordered locus">BL01904</name>
    <name evidence="7" type="ordered locus">BLi03549</name>
</gene>
<comment type="function">
    <text evidence="2 3">Kinase involved in a D-tagatose catabolic pathway (PubMed:23524682, PubMed:26159072). Catalyzes the phosphorylation of D-tagatose-1-phosphate (Tag-1P) to D-tagatose-1,6-bisphosphate (PubMed:26159072). Can also use D-fructose-1-phosphate, with 40-fold lower catalytic efficiency, but not tagatose-6-phosphate or fructose-6-phosphate (PubMed:26159072). The substrate, which occurs in a pyranose form in solution, may undergo a change to the furanose conformation after binding to the enzyme, in order to permit phosphorylation at C-6 (PubMed:26159072).</text>
</comment>
<comment type="catalytic activity">
    <reaction evidence="3">
        <text>alpha-D-tagatopyranose 1-phosphate + ATP = D-tagatofuranose 1,6-bisphosphate + ADP + H(+)</text>
        <dbReference type="Rhea" id="RHEA:69536"/>
        <dbReference type="ChEBI" id="CHEBI:15378"/>
        <dbReference type="ChEBI" id="CHEBI:30616"/>
        <dbReference type="ChEBI" id="CHEBI:58694"/>
        <dbReference type="ChEBI" id="CHEBI:184379"/>
        <dbReference type="ChEBI" id="CHEBI:456216"/>
        <dbReference type="EC" id="2.7.1.234"/>
    </reaction>
    <physiologicalReaction direction="left-to-right" evidence="3">
        <dbReference type="Rhea" id="RHEA:69537"/>
    </physiologicalReaction>
</comment>
<comment type="cofactor">
    <cofactor evidence="3">
        <name>Mg(2+)</name>
        <dbReference type="ChEBI" id="CHEBI:18420"/>
    </cofactor>
</comment>
<comment type="activity regulation">
    <text evidence="3">Activity is inhibited by tagatose-6-phosphate and fructose-6-phosphate.</text>
</comment>
<comment type="biophysicochemical properties">
    <kinetics>
        <KM evidence="3">3.2 mM for D-tagatose-1-phosphate</KM>
        <KM evidence="3">6.2 mM for D-fructose-1-phosphate</KM>
        <text evidence="3">kcat is 0.44 sec(-1) with D-tagatose-1-phosphate as substrate. kcat is 0.021 sec(-1) with D-fructose-1-phosphate as substrate.</text>
    </kinetics>
</comment>
<comment type="pathway">
    <text evidence="2">Carbohydrate degradation.</text>
</comment>
<comment type="similarity">
    <text evidence="5">Belongs to the carbohydrate kinase PfkB family.</text>
</comment>
<organism>
    <name type="scientific">Bacillus licheniformis (strain ATCC 14580 / DSM 13 / JCM 2505 / CCUG 7422 / NBRC 12200 / NCIMB 9375 / NCTC 10341 / NRRL NRS-1264 / Gibson 46)</name>
    <dbReference type="NCBI Taxonomy" id="279010"/>
    <lineage>
        <taxon>Bacteria</taxon>
        <taxon>Bacillati</taxon>
        <taxon>Bacillota</taxon>
        <taxon>Bacilli</taxon>
        <taxon>Bacillales</taxon>
        <taxon>Bacillaceae</taxon>
        <taxon>Bacillus</taxon>
    </lineage>
</organism>
<proteinExistence type="evidence at protein level"/>
<protein>
    <recommendedName>
        <fullName evidence="4">D-tagatose-1-phosphate kinase</fullName>
        <ecNumber evidence="3">2.7.1.234</ecNumber>
    </recommendedName>
</protein>
<keyword id="KW-0067">ATP-binding</keyword>
<keyword id="KW-0119">Carbohydrate metabolism</keyword>
<keyword id="KW-0418">Kinase</keyword>
<keyword id="KW-0460">Magnesium</keyword>
<keyword id="KW-0547">Nucleotide-binding</keyword>
<keyword id="KW-1185">Reference proteome</keyword>
<keyword id="KW-0808">Transferase</keyword>
<accession>Q65EY9</accession>
<accession>Q62QF6</accession>
<feature type="chain" id="PRO_0000461338" description="D-tagatose-1-phosphate kinase">
    <location>
        <begin position="1"/>
        <end position="304"/>
    </location>
</feature>
<feature type="active site" description="Proton acceptor" evidence="1">
    <location>
        <position position="250"/>
    </location>
</feature>
<name>TAGK_BACLD</name>
<dbReference type="EC" id="2.7.1.234" evidence="3"/>
<dbReference type="EMBL" id="CP000002">
    <property type="protein sequence ID" value="AAU25004.1"/>
    <property type="molecule type" value="Genomic_DNA"/>
</dbReference>
<dbReference type="EMBL" id="AE017333">
    <property type="protein sequence ID" value="AAU42375.1"/>
    <property type="molecule type" value="Genomic_DNA"/>
</dbReference>
<dbReference type="SMR" id="Q65EY9"/>
<dbReference type="STRING" id="279010.BL01904"/>
<dbReference type="KEGG" id="bld:BLi03549"/>
<dbReference type="KEGG" id="bli:BL01904"/>
<dbReference type="PATRIC" id="fig|279010.13.peg.3605"/>
<dbReference type="eggNOG" id="COG1105">
    <property type="taxonomic scope" value="Bacteria"/>
</dbReference>
<dbReference type="HOGENOM" id="CLU_050013_1_0_9"/>
<dbReference type="BioCyc" id="MetaCyc:MONOMER-21830"/>
<dbReference type="BRENDA" id="2.7.1.B27">
    <property type="organism ID" value="669"/>
</dbReference>
<dbReference type="Proteomes" id="UP000000606">
    <property type="component" value="Chromosome"/>
</dbReference>
<dbReference type="GO" id="GO:0005829">
    <property type="term" value="C:cytosol"/>
    <property type="evidence" value="ECO:0007669"/>
    <property type="project" value="TreeGrafter"/>
</dbReference>
<dbReference type="GO" id="GO:0008662">
    <property type="term" value="F:1-phosphofructokinase activity"/>
    <property type="evidence" value="ECO:0007669"/>
    <property type="project" value="InterPro"/>
</dbReference>
<dbReference type="GO" id="GO:0005524">
    <property type="term" value="F:ATP binding"/>
    <property type="evidence" value="ECO:0007669"/>
    <property type="project" value="UniProtKB-KW"/>
</dbReference>
<dbReference type="CDD" id="cd01164">
    <property type="entry name" value="FruK_PfkB_like"/>
    <property type="match status" value="1"/>
</dbReference>
<dbReference type="Gene3D" id="3.40.1190.20">
    <property type="match status" value="1"/>
</dbReference>
<dbReference type="InterPro" id="IPR022463">
    <property type="entry name" value="1-PFruKinase"/>
</dbReference>
<dbReference type="InterPro" id="IPR011611">
    <property type="entry name" value="PfkB_dom"/>
</dbReference>
<dbReference type="InterPro" id="IPR029056">
    <property type="entry name" value="Ribokinase-like"/>
</dbReference>
<dbReference type="InterPro" id="IPR017583">
    <property type="entry name" value="Tagatose/fructose_Pkinase"/>
</dbReference>
<dbReference type="NCBIfam" id="TIGR03168">
    <property type="entry name" value="1-PFK"/>
    <property type="match status" value="1"/>
</dbReference>
<dbReference type="NCBIfam" id="TIGR03828">
    <property type="entry name" value="pfkB"/>
    <property type="match status" value="1"/>
</dbReference>
<dbReference type="PANTHER" id="PTHR46566:SF1">
    <property type="entry name" value="1-PHOSPHOFRUCTOKINASE"/>
    <property type="match status" value="1"/>
</dbReference>
<dbReference type="PANTHER" id="PTHR46566">
    <property type="entry name" value="1-PHOSPHOFRUCTOKINASE-RELATED"/>
    <property type="match status" value="1"/>
</dbReference>
<dbReference type="Pfam" id="PF00294">
    <property type="entry name" value="PfkB"/>
    <property type="match status" value="1"/>
</dbReference>
<dbReference type="PIRSF" id="PIRSF000535">
    <property type="entry name" value="1PFK/6PFK/LacC"/>
    <property type="match status" value="1"/>
</dbReference>
<dbReference type="SUPFAM" id="SSF53613">
    <property type="entry name" value="Ribokinase-like"/>
    <property type="match status" value="1"/>
</dbReference>